<dbReference type="EMBL" id="AF152502">
    <property type="protein sequence ID" value="AAD43763.2"/>
    <property type="molecule type" value="mRNA"/>
</dbReference>
<dbReference type="EMBL" id="AF217749">
    <property type="protein sequence ID" value="AAF81913.1"/>
    <property type="molecule type" value="mRNA"/>
</dbReference>
<dbReference type="EMBL" id="BC100672">
    <property type="protein sequence ID" value="AAI00673.1"/>
    <property type="molecule type" value="mRNA"/>
</dbReference>
<dbReference type="EMBL" id="BC105636">
    <property type="protein sequence ID" value="AAI05637.1"/>
    <property type="molecule type" value="mRNA"/>
</dbReference>
<dbReference type="EMBL" id="BC105640">
    <property type="protein sequence ID" value="AAI05641.1"/>
    <property type="molecule type" value="mRNA"/>
</dbReference>
<dbReference type="EMBL" id="AF282973">
    <property type="protein sequence ID" value="AAG10032.1"/>
    <property type="molecule type" value="Genomic_DNA"/>
</dbReference>
<dbReference type="CCDS" id="CCDS75328.1"/>
<dbReference type="RefSeq" id="NP_061992.3">
    <property type="nucleotide sequence ID" value="NM_019119.4"/>
</dbReference>
<dbReference type="SMR" id="Q9Y5E1"/>
<dbReference type="BioGRID" id="121067">
    <property type="interactions" value="2"/>
</dbReference>
<dbReference type="FunCoup" id="Q9Y5E1">
    <property type="interactions" value="38"/>
</dbReference>
<dbReference type="IntAct" id="Q9Y5E1">
    <property type="interactions" value="1"/>
</dbReference>
<dbReference type="STRING" id="9606.ENSP00000478606"/>
<dbReference type="GlyConnect" id="1685">
    <property type="glycosylation" value="1 N-Linked glycan (1 site)"/>
</dbReference>
<dbReference type="GlyCosmos" id="Q9Y5E1">
    <property type="glycosylation" value="3 sites, 1 glycan"/>
</dbReference>
<dbReference type="GlyGen" id="Q9Y5E1">
    <property type="glycosylation" value="3 sites, 1 N-linked glycan (1 site)"/>
</dbReference>
<dbReference type="iPTMnet" id="Q9Y5E1"/>
<dbReference type="PhosphoSitePlus" id="Q9Y5E1"/>
<dbReference type="BioMuta" id="PCDHB9"/>
<dbReference type="DMDM" id="13431372"/>
<dbReference type="jPOST" id="Q9Y5E1"/>
<dbReference type="MassIVE" id="Q9Y5E1"/>
<dbReference type="PaxDb" id="9606-ENSP00000478606"/>
<dbReference type="PeptideAtlas" id="Q9Y5E1"/>
<dbReference type="ProteomicsDB" id="86340"/>
<dbReference type="Antibodypedia" id="77164">
    <property type="antibodies" value="1 antibodies from 1 providers"/>
</dbReference>
<dbReference type="DNASU" id="56127"/>
<dbReference type="Ensembl" id="ENST00000316105.7">
    <property type="protein sequence ID" value="ENSP00000478606.1"/>
    <property type="gene ID" value="ENSG00000177839.7"/>
</dbReference>
<dbReference type="Ensembl" id="ENST00000708374.1">
    <property type="protein sequence ID" value="ENSP00000517195.1"/>
    <property type="gene ID" value="ENSG00000291687.1"/>
</dbReference>
<dbReference type="GeneID" id="56127"/>
<dbReference type="KEGG" id="hsa:56127"/>
<dbReference type="MANE-Select" id="ENST00000316105.7">
    <property type="protein sequence ID" value="ENSP00000478606.1"/>
    <property type="RefSeq nucleotide sequence ID" value="NM_019119.5"/>
    <property type="RefSeq protein sequence ID" value="NP_061992.3"/>
</dbReference>
<dbReference type="UCSC" id="uc032vnm.2">
    <property type="organism name" value="human"/>
</dbReference>
<dbReference type="AGR" id="HGNC:8694"/>
<dbReference type="CTD" id="56127"/>
<dbReference type="DisGeNET" id="56127"/>
<dbReference type="GeneCards" id="PCDHB9"/>
<dbReference type="HGNC" id="HGNC:8694">
    <property type="gene designation" value="PCDHB9"/>
</dbReference>
<dbReference type="HPA" id="ENSG00000177839">
    <property type="expression patterns" value="Tissue enhanced (brain)"/>
</dbReference>
<dbReference type="MIM" id="604967">
    <property type="type" value="gene"/>
</dbReference>
<dbReference type="MIM" id="606335">
    <property type="type" value="gene"/>
</dbReference>
<dbReference type="neXtProt" id="NX_Q9Y5E1"/>
<dbReference type="OpenTargets" id="ENSG00000177839"/>
<dbReference type="PharmGKB" id="PA33043"/>
<dbReference type="VEuPathDB" id="HostDB:ENSG00000177839"/>
<dbReference type="eggNOG" id="KOG3594">
    <property type="taxonomic scope" value="Eukaryota"/>
</dbReference>
<dbReference type="GeneTree" id="ENSGT00940000163508"/>
<dbReference type="HOGENOM" id="CLU_006480_3_0_1"/>
<dbReference type="InParanoid" id="Q9Y5E1"/>
<dbReference type="OMA" id="FQSYQYE"/>
<dbReference type="OrthoDB" id="6252479at2759"/>
<dbReference type="PAN-GO" id="Q9Y5E1">
    <property type="GO annotations" value="2 GO annotations based on evolutionary models"/>
</dbReference>
<dbReference type="PathwayCommons" id="Q9Y5E1"/>
<dbReference type="BioGRID-ORCS" id="56127">
    <property type="hits" value="11 hits in 239 CRISPR screens"/>
</dbReference>
<dbReference type="GeneWiki" id="PCDHB9"/>
<dbReference type="GenomeRNAi" id="56127"/>
<dbReference type="Pharos" id="Q9Y5E1">
    <property type="development level" value="Tdark"/>
</dbReference>
<dbReference type="PRO" id="PR:Q9Y5E1"/>
<dbReference type="Proteomes" id="UP000005640">
    <property type="component" value="Chromosome 5"/>
</dbReference>
<dbReference type="RNAct" id="Q9Y5E1">
    <property type="molecule type" value="protein"/>
</dbReference>
<dbReference type="Bgee" id="ENSG00000177839">
    <property type="expression patterns" value="Expressed in ganglionic eminence and 103 other cell types or tissues"/>
</dbReference>
<dbReference type="ExpressionAtlas" id="Q9Y5E1">
    <property type="expression patterns" value="baseline and differential"/>
</dbReference>
<dbReference type="GO" id="GO:0016020">
    <property type="term" value="C:membrane"/>
    <property type="evidence" value="ECO:0000303"/>
    <property type="project" value="UniProtKB"/>
</dbReference>
<dbReference type="GO" id="GO:0005886">
    <property type="term" value="C:plasma membrane"/>
    <property type="evidence" value="ECO:0000318"/>
    <property type="project" value="GO_Central"/>
</dbReference>
<dbReference type="GO" id="GO:0045202">
    <property type="term" value="C:synapse"/>
    <property type="evidence" value="ECO:0007669"/>
    <property type="project" value="GOC"/>
</dbReference>
<dbReference type="GO" id="GO:0005509">
    <property type="term" value="F:calcium ion binding"/>
    <property type="evidence" value="ECO:0007669"/>
    <property type="project" value="InterPro"/>
</dbReference>
<dbReference type="GO" id="GO:0016339">
    <property type="term" value="P:calcium-dependent cell-cell adhesion via plasma membrane cell adhesion molecules"/>
    <property type="evidence" value="ECO:0000303"/>
    <property type="project" value="UniProtKB"/>
</dbReference>
<dbReference type="GO" id="GO:0007155">
    <property type="term" value="P:cell adhesion"/>
    <property type="evidence" value="ECO:0000318"/>
    <property type="project" value="GO_Central"/>
</dbReference>
<dbReference type="GO" id="GO:0007268">
    <property type="term" value="P:chemical synaptic transmission"/>
    <property type="evidence" value="ECO:0000304"/>
    <property type="project" value="UniProtKB"/>
</dbReference>
<dbReference type="GO" id="GO:0007156">
    <property type="term" value="P:homophilic cell adhesion via plasma membrane adhesion molecules"/>
    <property type="evidence" value="ECO:0007669"/>
    <property type="project" value="InterPro"/>
</dbReference>
<dbReference type="GO" id="GO:0007416">
    <property type="term" value="P:synapse assembly"/>
    <property type="evidence" value="ECO:0000304"/>
    <property type="project" value="UniProtKB"/>
</dbReference>
<dbReference type="CDD" id="cd11304">
    <property type="entry name" value="Cadherin_repeat"/>
    <property type="match status" value="4"/>
</dbReference>
<dbReference type="FunFam" id="2.60.40.60:FF:000001">
    <property type="entry name" value="Protocadherin alpha 2"/>
    <property type="match status" value="1"/>
</dbReference>
<dbReference type="FunFam" id="2.60.40.60:FF:000002">
    <property type="entry name" value="Protocadherin alpha 2"/>
    <property type="match status" value="1"/>
</dbReference>
<dbReference type="FunFam" id="2.60.40.60:FF:000006">
    <property type="entry name" value="Protocadherin alpha 2"/>
    <property type="match status" value="1"/>
</dbReference>
<dbReference type="FunFam" id="2.60.40.60:FF:000046">
    <property type="entry name" value="Protocadherin beta 5"/>
    <property type="match status" value="1"/>
</dbReference>
<dbReference type="FunFam" id="2.60.40.60:FF:000309">
    <property type="entry name" value="Protocadherin beta-8"/>
    <property type="match status" value="1"/>
</dbReference>
<dbReference type="FunFam" id="2.60.40.60:FF:000018">
    <property type="entry name" value="Protocadherin gamma c3"/>
    <property type="match status" value="1"/>
</dbReference>
<dbReference type="Gene3D" id="2.60.40.60">
    <property type="entry name" value="Cadherins"/>
    <property type="match status" value="6"/>
</dbReference>
<dbReference type="InterPro" id="IPR002126">
    <property type="entry name" value="Cadherin-like_dom"/>
</dbReference>
<dbReference type="InterPro" id="IPR015919">
    <property type="entry name" value="Cadherin-like_sf"/>
</dbReference>
<dbReference type="InterPro" id="IPR032455">
    <property type="entry name" value="Cadherin_C"/>
</dbReference>
<dbReference type="InterPro" id="IPR020894">
    <property type="entry name" value="Cadherin_CS"/>
</dbReference>
<dbReference type="InterPro" id="IPR013164">
    <property type="entry name" value="Cadherin_N"/>
</dbReference>
<dbReference type="InterPro" id="IPR050174">
    <property type="entry name" value="Protocadherin/Cadherin-CA"/>
</dbReference>
<dbReference type="PANTHER" id="PTHR24028">
    <property type="entry name" value="CADHERIN-87A"/>
    <property type="match status" value="1"/>
</dbReference>
<dbReference type="PANTHER" id="PTHR24028:SF128">
    <property type="entry name" value="PROTOCADHERIN BETA-9"/>
    <property type="match status" value="1"/>
</dbReference>
<dbReference type="Pfam" id="PF00028">
    <property type="entry name" value="Cadherin"/>
    <property type="match status" value="5"/>
</dbReference>
<dbReference type="Pfam" id="PF08266">
    <property type="entry name" value="Cadherin_2"/>
    <property type="match status" value="1"/>
</dbReference>
<dbReference type="Pfam" id="PF16492">
    <property type="entry name" value="Cadherin_C_2"/>
    <property type="match status" value="1"/>
</dbReference>
<dbReference type="PRINTS" id="PR00205">
    <property type="entry name" value="CADHERIN"/>
</dbReference>
<dbReference type="SMART" id="SM00112">
    <property type="entry name" value="CA"/>
    <property type="match status" value="5"/>
</dbReference>
<dbReference type="SUPFAM" id="SSF49313">
    <property type="entry name" value="Cadherin-like"/>
    <property type="match status" value="6"/>
</dbReference>
<dbReference type="PROSITE" id="PS00232">
    <property type="entry name" value="CADHERIN_1"/>
    <property type="match status" value="5"/>
</dbReference>
<dbReference type="PROSITE" id="PS50268">
    <property type="entry name" value="CADHERIN_2"/>
    <property type="match status" value="6"/>
</dbReference>
<gene>
    <name type="primary">PCDHB9</name>
    <name type="synonym">PCDH3H</name>
</gene>
<feature type="signal peptide" evidence="2">
    <location>
        <begin position="1"/>
        <end position="26"/>
    </location>
</feature>
<feature type="chain" id="PRO_0000003930" description="Protocadherin beta-9">
    <location>
        <begin position="27"/>
        <end position="797"/>
    </location>
</feature>
<feature type="topological domain" description="Extracellular" evidence="2">
    <location>
        <begin position="27"/>
        <end position="690"/>
    </location>
</feature>
<feature type="transmembrane region" description="Helical" evidence="2">
    <location>
        <begin position="691"/>
        <end position="711"/>
    </location>
</feature>
<feature type="topological domain" description="Cytoplasmic" evidence="2">
    <location>
        <begin position="712"/>
        <end position="797"/>
    </location>
</feature>
<feature type="domain" description="Cadherin 1" evidence="3">
    <location>
        <begin position="35"/>
        <end position="133"/>
    </location>
</feature>
<feature type="domain" description="Cadherin 2" evidence="3">
    <location>
        <begin position="138"/>
        <end position="242"/>
    </location>
</feature>
<feature type="domain" description="Cadherin 3" evidence="3">
    <location>
        <begin position="247"/>
        <end position="347"/>
    </location>
</feature>
<feature type="domain" description="Cadherin 4" evidence="3">
    <location>
        <begin position="352"/>
        <end position="451"/>
    </location>
</feature>
<feature type="domain" description="Cadherin 5" evidence="3">
    <location>
        <begin position="456"/>
        <end position="561"/>
    </location>
</feature>
<feature type="domain" description="Cadherin 6" evidence="3">
    <location>
        <begin position="568"/>
        <end position="671"/>
    </location>
</feature>
<feature type="region of interest" description="Disordered" evidence="4">
    <location>
        <begin position="777"/>
        <end position="797"/>
    </location>
</feature>
<feature type="compositionally biased region" description="Polar residues" evidence="4">
    <location>
        <begin position="786"/>
        <end position="797"/>
    </location>
</feature>
<feature type="glycosylation site" description="N-linked (GlcNAc...) asparagine" evidence="2">
    <location>
        <position position="169"/>
    </location>
</feature>
<feature type="glycosylation site" description="N-linked (GlcNAc...) asparagine" evidence="2">
    <location>
        <position position="418"/>
    </location>
</feature>
<feature type="glycosylation site" description="N-linked (GlcNAc...) asparagine" evidence="2">
    <location>
        <position position="567"/>
    </location>
</feature>
<feature type="sequence variant" id="VAR_061064" description="In dbSNP:rs2740588." evidence="6 8">
    <original>R</original>
    <variation>S</variation>
    <location>
        <position position="124"/>
    </location>
</feature>
<feature type="sequence variant" id="VAR_059186" description="In dbSNP:rs11167742.">
    <original>S</original>
    <variation>P</variation>
    <location>
        <position position="174"/>
    </location>
</feature>
<feature type="sequence variant" id="VAR_061065" description="In dbSNP:rs17844512.">
    <original>S</original>
    <variation>G</variation>
    <location>
        <position position="185"/>
    </location>
</feature>
<feature type="sequence variant" id="VAR_059187" description="In dbSNP:rs11167743." evidence="5 6 7 8">
    <original>V</original>
    <variation>A</variation>
    <location>
        <position position="239"/>
    </location>
</feature>
<feature type="sequence variant" id="VAR_061066" description="In dbSNP:rs10040383.">
    <original>K</original>
    <variation>E</variation>
    <location>
        <position position="414"/>
    </location>
</feature>
<feature type="sequence variant" id="VAR_061067" description="In dbSNP:rs2697530." evidence="6 8">
    <original>L</original>
    <variation>M</variation>
    <location>
        <position position="426"/>
    </location>
</feature>
<proteinExistence type="evidence at protein level"/>
<name>PCDB9_HUMAN</name>
<accession>Q9Y5E1</accession>
<accession>Q2M2U8</accession>
<accession>Q496X9</accession>
<accession>Q9NRJ8</accession>
<keyword id="KW-0106">Calcium</keyword>
<keyword id="KW-0130">Cell adhesion</keyword>
<keyword id="KW-1003">Cell membrane</keyword>
<keyword id="KW-0325">Glycoprotein</keyword>
<keyword id="KW-0472">Membrane</keyword>
<keyword id="KW-1267">Proteomics identification</keyword>
<keyword id="KW-1185">Reference proteome</keyword>
<keyword id="KW-0677">Repeat</keyword>
<keyword id="KW-0732">Signal</keyword>
<keyword id="KW-0812">Transmembrane</keyword>
<keyword id="KW-1133">Transmembrane helix</keyword>
<sequence length="797" mass="87127">MKTRGFSFPRQRQVLFLFLFWGVSLAGSGFGRYSVTEETEKGSFVVNLAKDLGLAEGELAARGTRVVSDDNKQYLLLDSHTGNLLTNEKLDREKLCGPKEPCMLYFQILMDDPFQIYRAELRVRDINDHSPVFRHKEMVLKISENTAEGTAFRLERAQDPDEGHNSIQNYTISSNSFFHIKISGSDEGMIYPELVLDKALDREEQEELSLTLTALDGGSPSRSGTSTIRIVVLDVNDNVPQFAQALYETQAPENSPVGSLIVKVSAGDADSGVNAEVSYSFFDASEDILTTFQINPFSGEIFLRELLDYELVNSYKINIQAMDGGGLSARCTVLIKVLDSNDNPPELIISSLSNSVAENSPGIVLAVFKIKDRDSGENGKTICYVQDNLPFFLKPSVDNFYILMTEGALDRESKAEYNITITVTDLGTPRLKTEHSITLQVSDVNDNAPAFTQTSYTLFVRENNSPALHIGSVSATDRDSGTNAQVTYSLLPPQDPHLPLASLVSINADNGHLFALRSLDYEALQAFDFRVGASDRGSPALSSEALVRVLVLDANDNSPFVLYPLQNGSAPCTELVPRAAEPGYLVTKVVAVDGDSGQNAWLSYQLLKATEPGLFGVWAHNGEVRTARLLSERDAAKHRLVVLVKDNGEPPRSATATLHVLLVDGFSQPYLPLPEAAPAQAQADLLTVYLVVALASVSSLFLLSVLLFVAVRLCRRSRAASVGRCSVPEGPFPGHLVDVSGTGTLFQSYQYEVCLTGGSETGEFKFLKPITPHLPPHRGGKEIEENSTLPNSFGFNY</sequence>
<comment type="function">
    <text>Potential calcium-dependent cell-adhesion protein. May be involved in the establishment and maintenance of specific neuronal connections in the brain.</text>
</comment>
<comment type="subcellular location">
    <subcellularLocation>
        <location evidence="1">Cell membrane</location>
        <topology evidence="1">Single-pass type I membrane protein</topology>
    </subcellularLocation>
</comment>
<evidence type="ECO:0000250" key="1"/>
<evidence type="ECO:0000255" key="2"/>
<evidence type="ECO:0000255" key="3">
    <source>
        <dbReference type="PROSITE-ProRule" id="PRU00043"/>
    </source>
</evidence>
<evidence type="ECO:0000256" key="4">
    <source>
        <dbReference type="SAM" id="MobiDB-lite"/>
    </source>
</evidence>
<evidence type="ECO:0000269" key="5">
    <source>
    </source>
</evidence>
<evidence type="ECO:0000269" key="6">
    <source>
    </source>
</evidence>
<evidence type="ECO:0000269" key="7">
    <source>
    </source>
</evidence>
<evidence type="ECO:0000269" key="8">
    <source ref="5"/>
</evidence>
<protein>
    <recommendedName>
        <fullName>Protocadherin beta-9</fullName>
        <shortName>PCDH-beta-9</shortName>
    </recommendedName>
    <alternativeName>
        <fullName>Protocadherin-3H</fullName>
    </alternativeName>
</protein>
<reference key="1">
    <citation type="journal article" date="1999" name="Cell">
        <title>A striking organization of a large family of human neural cadherin-like cell adhesion genes.</title>
        <authorList>
            <person name="Wu Q."/>
            <person name="Maniatis T."/>
        </authorList>
    </citation>
    <scope>NUCLEOTIDE SEQUENCE [MRNA]</scope>
    <scope>VARIANT ALA-239</scope>
</reference>
<reference key="2">
    <citation type="submission" date="2000-11" db="EMBL/GenBank/DDBJ databases">
        <authorList>
            <person name="Wu Q."/>
            <person name="Maniatis T."/>
        </authorList>
    </citation>
    <scope>SEQUENCE REVISION</scope>
</reference>
<reference key="3">
    <citation type="journal article" date="2001" name="FEBS Lett.">
        <title>The human and murine protocadherin-beta one-exon gene families show high evolutionary conservation, despite the difference in gene number.</title>
        <authorList>
            <person name="Vanhalst K."/>
            <person name="Kools P."/>
            <person name="Vanden Eynde E."/>
            <person name="van Roy F."/>
        </authorList>
    </citation>
    <scope>NUCLEOTIDE SEQUENCE [MRNA]</scope>
    <scope>VARIANTS SER-124; ALA-239 AND MET-426</scope>
</reference>
<reference key="4">
    <citation type="journal article" date="2004" name="Genome Res.">
        <title>The status, quality, and expansion of the NIH full-length cDNA project: the Mammalian Gene Collection (MGC).</title>
        <authorList>
            <consortium name="The MGC Project Team"/>
        </authorList>
    </citation>
    <scope>NUCLEOTIDE SEQUENCE [LARGE SCALE MRNA]</scope>
    <scope>VARIANT ALA-239</scope>
</reference>
<reference key="5">
    <citation type="submission" date="2000-06" db="EMBL/GenBank/DDBJ databases">
        <title>Molecular analysis of the human protocadherin-3 (PCDH-beta) gene cluster.</title>
        <authorList>
            <person name="Kools P.F.J."/>
            <person name="van Roy F."/>
        </authorList>
    </citation>
    <scope>NUCLEOTIDE SEQUENCE [GENOMIC DNA] OF 1-536</scope>
    <scope>VARIANTS SER-124; ALA-239 AND MET-426</scope>
</reference>
<organism>
    <name type="scientific">Homo sapiens</name>
    <name type="common">Human</name>
    <dbReference type="NCBI Taxonomy" id="9606"/>
    <lineage>
        <taxon>Eukaryota</taxon>
        <taxon>Metazoa</taxon>
        <taxon>Chordata</taxon>
        <taxon>Craniata</taxon>
        <taxon>Vertebrata</taxon>
        <taxon>Euteleostomi</taxon>
        <taxon>Mammalia</taxon>
        <taxon>Eutheria</taxon>
        <taxon>Euarchontoglires</taxon>
        <taxon>Primates</taxon>
        <taxon>Haplorrhini</taxon>
        <taxon>Catarrhini</taxon>
        <taxon>Hominidae</taxon>
        <taxon>Homo</taxon>
    </lineage>
</organism>